<keyword id="KW-0150">Chloroplast</keyword>
<keyword id="KW-0472">Membrane</keyword>
<keyword id="KW-0602">Photosynthesis</keyword>
<keyword id="KW-0934">Plastid</keyword>
<keyword id="KW-0793">Thylakoid</keyword>
<keyword id="KW-0812">Transmembrane</keyword>
<keyword id="KW-1133">Transmembrane helix</keyword>
<evidence type="ECO:0000255" key="1">
    <source>
        <dbReference type="HAMAP-Rule" id="MF_00437"/>
    </source>
</evidence>
<reference key="1">
    <citation type="journal article" date="2007" name="Mol. Biol. Evol.">
        <title>Gene relocations within chloroplast genomes of Jasminum and Menodora (Oleaceae) are due to multiple, overlapping inversions.</title>
        <authorList>
            <person name="Lee H.-L."/>
            <person name="Jansen R.K."/>
            <person name="Chumley T.W."/>
            <person name="Kim K.-J."/>
        </authorList>
    </citation>
    <scope>NUCLEOTIDE SEQUENCE [LARGE SCALE GENOMIC DNA]</scope>
</reference>
<proteinExistence type="inferred from homology"/>
<geneLocation type="chloroplast"/>
<comment type="function">
    <text evidence="1">Seems to be required for the assembly of the photosystem I complex.</text>
</comment>
<comment type="subcellular location">
    <subcellularLocation>
        <location evidence="1">Plastid</location>
        <location evidence="1">Chloroplast thylakoid membrane</location>
        <topology evidence="1">Multi-pass membrane protein</topology>
    </subcellularLocation>
</comment>
<comment type="similarity">
    <text evidence="1">Belongs to the Ycf4 family.</text>
</comment>
<feature type="chain" id="PRO_0000275658" description="Photosystem I assembly protein Ycf4">
    <location>
        <begin position="1"/>
        <end position="184"/>
    </location>
</feature>
<feature type="transmembrane region" description="Helical" evidence="1">
    <location>
        <begin position="19"/>
        <end position="39"/>
    </location>
</feature>
<feature type="transmembrane region" description="Helical" evidence="1">
    <location>
        <begin position="57"/>
        <end position="77"/>
    </location>
</feature>
<organism>
    <name type="scientific">Jasminum nudiflorum</name>
    <name type="common">Winter jasmine</name>
    <dbReference type="NCBI Taxonomy" id="126431"/>
    <lineage>
        <taxon>Eukaryota</taxon>
        <taxon>Viridiplantae</taxon>
        <taxon>Streptophyta</taxon>
        <taxon>Embryophyta</taxon>
        <taxon>Tracheophyta</taxon>
        <taxon>Spermatophyta</taxon>
        <taxon>Magnoliopsida</taxon>
        <taxon>eudicotyledons</taxon>
        <taxon>Gunneridae</taxon>
        <taxon>Pentapetalae</taxon>
        <taxon>asterids</taxon>
        <taxon>lamiids</taxon>
        <taxon>Lamiales</taxon>
        <taxon>Oleaceae</taxon>
        <taxon>Jasmineae</taxon>
        <taxon>Jasminum</taxon>
    </lineage>
</organism>
<protein>
    <recommendedName>
        <fullName evidence="1">Photosystem I assembly protein Ycf4</fullName>
    </recommendedName>
</protein>
<dbReference type="EMBL" id="DQ673255">
    <property type="protein sequence ID" value="ABG74629.1"/>
    <property type="molecule type" value="Genomic_DNA"/>
</dbReference>
<dbReference type="RefSeq" id="YP_778491.1">
    <property type="nucleotide sequence ID" value="NC_008407.1"/>
</dbReference>
<dbReference type="GeneID" id="4319824"/>
<dbReference type="GO" id="GO:0009535">
    <property type="term" value="C:chloroplast thylakoid membrane"/>
    <property type="evidence" value="ECO:0007669"/>
    <property type="project" value="UniProtKB-SubCell"/>
</dbReference>
<dbReference type="GO" id="GO:0009522">
    <property type="term" value="C:photosystem I"/>
    <property type="evidence" value="ECO:0007669"/>
    <property type="project" value="InterPro"/>
</dbReference>
<dbReference type="GO" id="GO:0015979">
    <property type="term" value="P:photosynthesis"/>
    <property type="evidence" value="ECO:0007669"/>
    <property type="project" value="UniProtKB-UniRule"/>
</dbReference>
<dbReference type="HAMAP" id="MF_00437">
    <property type="entry name" value="Ycf4"/>
    <property type="match status" value="1"/>
</dbReference>
<dbReference type="InterPro" id="IPR003359">
    <property type="entry name" value="PSI_Ycf4_assembly"/>
</dbReference>
<dbReference type="PANTHER" id="PTHR33288">
    <property type="match status" value="1"/>
</dbReference>
<dbReference type="PANTHER" id="PTHR33288:SF4">
    <property type="entry name" value="PHOTOSYSTEM I ASSEMBLY PROTEIN YCF4"/>
    <property type="match status" value="1"/>
</dbReference>
<dbReference type="Pfam" id="PF02392">
    <property type="entry name" value="Ycf4"/>
    <property type="match status" value="1"/>
</dbReference>
<accession>Q06RD0</accession>
<sequence length="184" mass="21416">MSWRSEDIWIELLTGSRKLSNFCWALILFLGSLGFLLVGTSSYLGRNWISFVPSQQFIFFPQGIVMSFYGIAGLFISSYLWCTISWNIGSGYDRFDRKEGIVCIFRWGFPGKNRRIFLRFLIKDIQSVRIEVKEGLYARHVLYMDIRGQGAIPLTRTDENLTPREIEQKAAELAYFLRVPIEVF</sequence>
<name>YCF4_JASNU</name>
<gene>
    <name evidence="1" type="primary">ycf4</name>
    <name type="ORF">JNC0453</name>
</gene>